<comment type="function">
    <text evidence="2">Expression of the urease operon increases the likelihood of bacterial survival by contributing to acid resistance in vitro and in vivo in BALB/c mice. Y.enterocolitica enters the body via an oral path and must survive the acidic stomach before being able to colonize the intestinal mucosa (PubMed:7558281).</text>
</comment>
<comment type="catalytic activity">
    <reaction evidence="1">
        <text>urea + 2 H2O + H(+) = hydrogencarbonate + 2 NH4(+)</text>
        <dbReference type="Rhea" id="RHEA:20557"/>
        <dbReference type="ChEBI" id="CHEBI:15377"/>
        <dbReference type="ChEBI" id="CHEBI:15378"/>
        <dbReference type="ChEBI" id="CHEBI:16199"/>
        <dbReference type="ChEBI" id="CHEBI:17544"/>
        <dbReference type="ChEBI" id="CHEBI:28938"/>
        <dbReference type="EC" id="3.5.1.5"/>
    </reaction>
</comment>
<comment type="pathway">
    <text evidence="1">Nitrogen metabolism; urea degradation; CO(2) and NH(3) from urea (urease route): step 1/1.</text>
</comment>
<comment type="subunit">
    <text evidence="1">Heterotrimer of UreA (gamma), UreB (beta) and UreC (alpha) subunits. Three heterotrimers associate to form the active enzyme.</text>
</comment>
<comment type="subcellular location">
    <subcellularLocation>
        <location evidence="1">Cytoplasm</location>
    </subcellularLocation>
</comment>
<comment type="similarity">
    <text evidence="1">Belongs to the urease gamma subunit family.</text>
</comment>
<feature type="chain" id="PRO_0000098061" description="Urease subunit gamma">
    <location>
        <begin position="1"/>
        <end position="100"/>
    </location>
</feature>
<feature type="sequence conflict" description="In Ref. 2." evidence="3" ref="2">
    <original>K</original>
    <variation>KPK</variation>
    <location>
        <position position="24"/>
    </location>
</feature>
<feature type="sequence conflict" description="In Ref. 2; CAA79314." evidence="3" ref="2">
    <original>E</original>
    <variation>V</variation>
    <location>
        <position position="41"/>
    </location>
</feature>
<gene>
    <name evidence="1" type="primary">ureA</name>
    <name type="synonym">yeuA</name>
</gene>
<evidence type="ECO:0000255" key="1">
    <source>
        <dbReference type="HAMAP-Rule" id="MF_00739"/>
    </source>
</evidence>
<evidence type="ECO:0000269" key="2">
    <source>
    </source>
</evidence>
<evidence type="ECO:0000305" key="3"/>
<proteinExistence type="inferred from homology"/>
<accession>P31496</accession>
<organism>
    <name type="scientific">Yersinia enterocolitica</name>
    <dbReference type="NCBI Taxonomy" id="630"/>
    <lineage>
        <taxon>Bacteria</taxon>
        <taxon>Pseudomonadati</taxon>
        <taxon>Pseudomonadota</taxon>
        <taxon>Gammaproteobacteria</taxon>
        <taxon>Enterobacterales</taxon>
        <taxon>Yersiniaceae</taxon>
        <taxon>Yersinia</taxon>
    </lineage>
</organism>
<keyword id="KW-0963">Cytoplasm</keyword>
<keyword id="KW-0378">Hydrolase</keyword>
<keyword id="KW-0843">Virulence</keyword>
<dbReference type="EC" id="3.5.1.5" evidence="1"/>
<dbReference type="EMBL" id="L24101">
    <property type="protein sequence ID" value="AAA50994.1"/>
    <property type="molecule type" value="Genomic_DNA"/>
</dbReference>
<dbReference type="EMBL" id="Z18865">
    <property type="protein sequence ID" value="CAA79314.1"/>
    <property type="molecule type" value="Genomic_DNA"/>
</dbReference>
<dbReference type="PIR" id="S31417">
    <property type="entry name" value="S31417"/>
</dbReference>
<dbReference type="SMR" id="P31496"/>
<dbReference type="UniPathway" id="UPA00258">
    <property type="reaction ID" value="UER00370"/>
</dbReference>
<dbReference type="GO" id="GO:0005737">
    <property type="term" value="C:cytoplasm"/>
    <property type="evidence" value="ECO:0007669"/>
    <property type="project" value="UniProtKB-SubCell"/>
</dbReference>
<dbReference type="GO" id="GO:0016151">
    <property type="term" value="F:nickel cation binding"/>
    <property type="evidence" value="ECO:0007669"/>
    <property type="project" value="InterPro"/>
</dbReference>
<dbReference type="GO" id="GO:0009039">
    <property type="term" value="F:urease activity"/>
    <property type="evidence" value="ECO:0007669"/>
    <property type="project" value="UniProtKB-UniRule"/>
</dbReference>
<dbReference type="GO" id="GO:0043419">
    <property type="term" value="P:urea catabolic process"/>
    <property type="evidence" value="ECO:0007669"/>
    <property type="project" value="UniProtKB-UniRule"/>
</dbReference>
<dbReference type="CDD" id="cd00390">
    <property type="entry name" value="Urease_gamma"/>
    <property type="match status" value="1"/>
</dbReference>
<dbReference type="Gene3D" id="3.30.280.10">
    <property type="entry name" value="Urease, gamma-like subunit"/>
    <property type="match status" value="1"/>
</dbReference>
<dbReference type="HAMAP" id="MF_00739">
    <property type="entry name" value="Urease_gamma"/>
    <property type="match status" value="1"/>
</dbReference>
<dbReference type="InterPro" id="IPR012010">
    <property type="entry name" value="Urease_gamma"/>
</dbReference>
<dbReference type="InterPro" id="IPR002026">
    <property type="entry name" value="Urease_gamma/gamma-beta_su"/>
</dbReference>
<dbReference type="InterPro" id="IPR036463">
    <property type="entry name" value="Urease_gamma_sf"/>
</dbReference>
<dbReference type="InterPro" id="IPR050069">
    <property type="entry name" value="Urease_subunit"/>
</dbReference>
<dbReference type="NCBIfam" id="NF009712">
    <property type="entry name" value="PRK13241.1"/>
    <property type="match status" value="1"/>
</dbReference>
<dbReference type="NCBIfam" id="TIGR00193">
    <property type="entry name" value="urease_gam"/>
    <property type="match status" value="1"/>
</dbReference>
<dbReference type="PANTHER" id="PTHR33569">
    <property type="entry name" value="UREASE"/>
    <property type="match status" value="1"/>
</dbReference>
<dbReference type="PANTHER" id="PTHR33569:SF1">
    <property type="entry name" value="UREASE"/>
    <property type="match status" value="1"/>
</dbReference>
<dbReference type="Pfam" id="PF00547">
    <property type="entry name" value="Urease_gamma"/>
    <property type="match status" value="1"/>
</dbReference>
<dbReference type="PIRSF" id="PIRSF001223">
    <property type="entry name" value="Urease_gamma"/>
    <property type="match status" value="1"/>
</dbReference>
<dbReference type="SUPFAM" id="SSF54111">
    <property type="entry name" value="Urease, gamma-subunit"/>
    <property type="match status" value="1"/>
</dbReference>
<sequence>MQLTPREVEKLMIYTLSDVAFKRKARGLKLNYPEAVSIITETAMEGARDGKSVEDVMKEASKVLTKDDVMDGVADLIPNVQVEAIFTDGSRLVTVHDPIK</sequence>
<name>URE3_YEREN</name>
<protein>
    <recommendedName>
        <fullName evidence="1">Urease subunit gamma</fullName>
        <ecNumber evidence="1">3.5.1.5</ecNumber>
    </recommendedName>
    <alternativeName>
        <fullName evidence="1">Urea amidohydrolase subunit gamma</fullName>
    </alternativeName>
</protein>
<reference key="1">
    <citation type="journal article" date="1994" name="Gene">
        <title>Characterisation of the urease-encoding gene complex of Yersinia enterocolitica.</title>
        <authorList>
            <person name="de Koning-Ward T.F."/>
            <person name="Ward A.C."/>
            <person name="Robins-Browne R.M."/>
        </authorList>
    </citation>
    <scope>NUCLEOTIDE SEQUENCE [GENOMIC DNA]</scope>
    <source>
        <strain>A2635 / Serotype O:8</strain>
    </source>
</reference>
<reference key="2">
    <citation type="journal article" date="1993" name="Infect. Immun.">
        <title>The putative arthritogenic cationic 19-kilodalton antigen of Yersinia enterocolitica is a urease beta-subunit.</title>
        <authorList>
            <person name="Skurnik M."/>
            <person name="Batsford S."/>
            <person name="Mertz A.K.H."/>
            <person name="Schiltz E."/>
            <person name="Toivanen P."/>
        </authorList>
    </citation>
    <scope>NUCLEOTIDE SEQUENCE [GENOMIC DNA]</scope>
    <source>
        <strain>6471/76 / Serotype O:3</strain>
    </source>
</reference>
<reference key="3">
    <citation type="journal article" date="1995" name="Infect. Immun.">
        <title>Contribution of urease to acid tolerance in Yersinia enterocolitica.</title>
        <authorList>
            <person name="de Koning-Ward T.F."/>
            <person name="Robins-Browne R.M."/>
        </authorList>
    </citation>
    <scope>ROLE IN VIRULENCE</scope>
    <source>
        <strain>W22703 / Serogroup O:9</strain>
    </source>
</reference>